<dbReference type="EMBL" id="L28920">
    <property type="protein sequence ID" value="AAC09503.1"/>
    <property type="molecule type" value="Genomic_DNA"/>
</dbReference>
<dbReference type="EMBL" id="AY557708">
    <property type="protein sequence ID" value="AAS56034.1"/>
    <property type="molecule type" value="Genomic_DNA"/>
</dbReference>
<dbReference type="PIR" id="S48994">
    <property type="entry name" value="S48994"/>
</dbReference>
<dbReference type="RefSeq" id="NP_012083.1">
    <property type="nucleotide sequence ID" value="NM_001179344.1"/>
</dbReference>
<dbReference type="SMR" id="P0CI66"/>
<dbReference type="BioGRID" id="36646">
    <property type="interactions" value="35"/>
</dbReference>
<dbReference type="STRING" id="4932.YHR213W"/>
<dbReference type="PaxDb" id="4932-YHR213W"/>
<dbReference type="EnsemblFungi" id="YHR213W_mRNA">
    <property type="protein sequence ID" value="YHR213W"/>
    <property type="gene ID" value="YHR213W"/>
</dbReference>
<dbReference type="KEGG" id="sce:YHR213W"/>
<dbReference type="SGD" id="S000000088">
    <property type="gene designation" value="YAR062W"/>
</dbReference>
<dbReference type="VEuPathDB" id="FungiDB:YHR213W"/>
<dbReference type="eggNOG" id="ENOG502QPQC">
    <property type="taxonomic scope" value="Eukaryota"/>
</dbReference>
<dbReference type="HOGENOM" id="CLU_1379108_0_0_1"/>
<dbReference type="OMA" id="SASSXSD"/>
<dbReference type="OrthoDB" id="4070698at2759"/>
<dbReference type="ExpressionAtlas" id="P0CI66">
    <property type="expression patterns" value="baseline"/>
</dbReference>
<dbReference type="GO" id="GO:0000128">
    <property type="term" value="P:flocculation"/>
    <property type="evidence" value="ECO:0007669"/>
    <property type="project" value="InterPro"/>
</dbReference>
<dbReference type="Gene3D" id="2.60.120.1560">
    <property type="match status" value="1"/>
</dbReference>
<dbReference type="InterPro" id="IPR001389">
    <property type="entry name" value="Flocculin"/>
</dbReference>
<dbReference type="InterPro" id="IPR037524">
    <property type="entry name" value="PA14/GLEYA"/>
</dbReference>
<dbReference type="InterPro" id="IPR011658">
    <property type="entry name" value="PA14_dom"/>
</dbReference>
<dbReference type="Pfam" id="PF00624">
    <property type="entry name" value="Flocculin"/>
    <property type="match status" value="1"/>
</dbReference>
<dbReference type="Pfam" id="PF07691">
    <property type="entry name" value="PA14"/>
    <property type="match status" value="1"/>
</dbReference>
<dbReference type="SMART" id="SM00758">
    <property type="entry name" value="PA14"/>
    <property type="match status" value="1"/>
</dbReference>
<dbReference type="SUPFAM" id="SSF56988">
    <property type="entry name" value="Anthrax protective antigen"/>
    <property type="match status" value="1"/>
</dbReference>
<dbReference type="PROSITE" id="PS51820">
    <property type="entry name" value="PA14"/>
    <property type="match status" value="1"/>
</dbReference>
<organism>
    <name type="scientific">Saccharomyces cerevisiae (strain ATCC 204508 / S288c)</name>
    <name type="common">Baker's yeast</name>
    <dbReference type="NCBI Taxonomy" id="559292"/>
    <lineage>
        <taxon>Eukaryota</taxon>
        <taxon>Fungi</taxon>
        <taxon>Dikarya</taxon>
        <taxon>Ascomycota</taxon>
        <taxon>Saccharomycotina</taxon>
        <taxon>Saccharomycetes</taxon>
        <taxon>Saccharomycetales</taxon>
        <taxon>Saccharomycetaceae</taxon>
        <taxon>Saccharomyces</taxon>
    </lineage>
</organism>
<gene>
    <name type="ordered locus">YAR062W</name>
</gene>
<feature type="chain" id="PRO_0000202432" description="Putative uncharacterized protein YAR062W">
    <location>
        <begin position="1"/>
        <end position="198"/>
    </location>
</feature>
<feature type="domain" description="PA14" evidence="1">
    <location>
        <begin position="1"/>
        <end position="110"/>
    </location>
</feature>
<accession>P0CI66</accession>
<accession>P38896</accession>
<evidence type="ECO:0000255" key="1">
    <source>
        <dbReference type="PROSITE-ProRule" id="PRU01164"/>
    </source>
</evidence>
<evidence type="ECO:0000305" key="2"/>
<evidence type="ECO:0000305" key="3">
    <source>
    </source>
</evidence>
<sequence>MTGYFLPPQTSSYTFRFAKVDDSAILSVGGNVAFECCAQEQPPITSTDFTINGIKPWQGSLPDNIGGTVYMYAGYYYPLKVVYSNAVSWGTLPISVELPDGTTVSDDFEGYVYSFDDDLSQSNCTIPDPSKHTTSIVTTTTELWTGTFTSTSTEMTTVTGTNGQPTDETVIVAKAPTTATSSSLSSSSSEQITSSITS</sequence>
<reference key="1">
    <citation type="journal article" date="1995" name="Proc. Natl. Acad. Sci. U.S.A.">
        <title>The nucleotide sequence of chromosome I from Saccharomyces cerevisiae.</title>
        <authorList>
            <person name="Bussey H."/>
            <person name="Kaback D.B."/>
            <person name="Zhong W.-W."/>
            <person name="Vo D.H."/>
            <person name="Clark M.W."/>
            <person name="Fortin N."/>
            <person name="Hall J."/>
            <person name="Ouellette B.F.F."/>
            <person name="Keng T."/>
            <person name="Barton A.B."/>
            <person name="Su Y."/>
            <person name="Davies C.J."/>
            <person name="Storms R.K."/>
        </authorList>
    </citation>
    <scope>NUCLEOTIDE SEQUENCE [LARGE SCALE GENOMIC DNA]</scope>
    <source>
        <strain>ATCC 204508 / S288c</strain>
    </source>
</reference>
<reference key="2">
    <citation type="journal article" date="2014" name="G3 (Bethesda)">
        <title>The reference genome sequence of Saccharomyces cerevisiae: Then and now.</title>
        <authorList>
            <person name="Engel S.R."/>
            <person name="Dietrich F.S."/>
            <person name="Fisk D.G."/>
            <person name="Binkley G."/>
            <person name="Balakrishnan R."/>
            <person name="Costanzo M.C."/>
            <person name="Dwight S.S."/>
            <person name="Hitz B.C."/>
            <person name="Karra K."/>
            <person name="Nash R.S."/>
            <person name="Weng S."/>
            <person name="Wong E.D."/>
            <person name="Lloyd P."/>
            <person name="Skrzypek M.S."/>
            <person name="Miyasato S.R."/>
            <person name="Simison M."/>
            <person name="Cherry J.M."/>
        </authorList>
    </citation>
    <scope>GENOME REANNOTATION</scope>
    <source>
        <strain>ATCC 204508 / S288c</strain>
    </source>
</reference>
<reference key="3">
    <citation type="journal article" date="2007" name="Genome Res.">
        <title>Approaching a complete repository of sequence-verified protein-encoding clones for Saccharomyces cerevisiae.</title>
        <authorList>
            <person name="Hu Y."/>
            <person name="Rolfs A."/>
            <person name="Bhullar B."/>
            <person name="Murthy T.V.S."/>
            <person name="Zhu C."/>
            <person name="Berger M.F."/>
            <person name="Camargo A.A."/>
            <person name="Kelley F."/>
            <person name="McCarron S."/>
            <person name="Jepson D."/>
            <person name="Richardson A."/>
            <person name="Raphael J."/>
            <person name="Moreira D."/>
            <person name="Taycher E."/>
            <person name="Zuo D."/>
            <person name="Mohr S."/>
            <person name="Kane M.F."/>
            <person name="Williamson J."/>
            <person name="Simpson A.J.G."/>
            <person name="Bulyk M.L."/>
            <person name="Harlow E."/>
            <person name="Marsischky G."/>
            <person name="Kolodner R.D."/>
            <person name="LaBaer J."/>
        </authorList>
    </citation>
    <scope>NUCLEOTIDE SEQUENCE [GENOMIC DNA]</scope>
    <source>
        <strain>ATCC 204508 / S288c</strain>
    </source>
</reference>
<comment type="similarity">
    <text evidence="2">Belongs to the flocculin family.</text>
</comment>
<comment type="caution">
    <text evidence="3">Could be the product of a pseudogene unlikely to encode a functional protein. This is a truncated version of a flocculin protein family member. Because of that it is not part of the S.cerevisiae S288c complete/reference proteome set.</text>
</comment>
<name>YAN2_YEAST</name>
<proteinExistence type="uncertain"/>
<protein>
    <recommendedName>
        <fullName>Putative uncharacterized protein YAR062W</fullName>
    </recommendedName>
</protein>